<feature type="chain" id="PRO_0000201217" description="DNA-binding transcriptional regulator BolA">
    <location>
        <begin position="1"/>
        <end position="106"/>
    </location>
</feature>
<feature type="region of interest" description="Disordered" evidence="2">
    <location>
        <begin position="84"/>
        <end position="106"/>
    </location>
</feature>
<accession>Q9KPS0</accession>
<evidence type="ECO:0000250" key="1">
    <source>
        <dbReference type="UniProtKB" id="P0ABE2"/>
    </source>
</evidence>
<evidence type="ECO:0000256" key="2">
    <source>
        <dbReference type="SAM" id="MobiDB-lite"/>
    </source>
</evidence>
<evidence type="ECO:0000305" key="3"/>
<protein>
    <recommendedName>
        <fullName evidence="1">DNA-binding transcriptional regulator BolA</fullName>
    </recommendedName>
</protein>
<dbReference type="EMBL" id="AE003852">
    <property type="protein sequence ID" value="AAF95440.1"/>
    <property type="molecule type" value="Genomic_DNA"/>
</dbReference>
<dbReference type="PIR" id="H82094">
    <property type="entry name" value="H82094"/>
</dbReference>
<dbReference type="RefSeq" id="NP_231927.1">
    <property type="nucleotide sequence ID" value="NC_002505.1"/>
</dbReference>
<dbReference type="RefSeq" id="WP_000613859.1">
    <property type="nucleotide sequence ID" value="NZ_LT906614.1"/>
</dbReference>
<dbReference type="SMR" id="Q9KPS0"/>
<dbReference type="STRING" id="243277.VC_2296"/>
<dbReference type="DNASU" id="2613092"/>
<dbReference type="EnsemblBacteria" id="AAF95440">
    <property type="protein sequence ID" value="AAF95440"/>
    <property type="gene ID" value="VC_2296"/>
</dbReference>
<dbReference type="KEGG" id="vch:VC_2296"/>
<dbReference type="PATRIC" id="fig|243277.26.peg.2190"/>
<dbReference type="eggNOG" id="COG0271">
    <property type="taxonomic scope" value="Bacteria"/>
</dbReference>
<dbReference type="HOGENOM" id="CLU_109462_3_1_6"/>
<dbReference type="Proteomes" id="UP000000584">
    <property type="component" value="Chromosome 1"/>
</dbReference>
<dbReference type="GO" id="GO:0005829">
    <property type="term" value="C:cytosol"/>
    <property type="evidence" value="ECO:0000318"/>
    <property type="project" value="GO_Central"/>
</dbReference>
<dbReference type="GO" id="GO:0003677">
    <property type="term" value="F:DNA binding"/>
    <property type="evidence" value="ECO:0007669"/>
    <property type="project" value="UniProtKB-KW"/>
</dbReference>
<dbReference type="GO" id="GO:0006351">
    <property type="term" value="P:DNA-templated transcription"/>
    <property type="evidence" value="ECO:0000318"/>
    <property type="project" value="GO_Central"/>
</dbReference>
<dbReference type="FunFam" id="3.30.300.90:FF:000001">
    <property type="entry name" value="Transcriptional regulator BolA"/>
    <property type="match status" value="1"/>
</dbReference>
<dbReference type="Gene3D" id="3.30.300.90">
    <property type="entry name" value="BolA-like"/>
    <property type="match status" value="1"/>
</dbReference>
<dbReference type="InterPro" id="IPR002634">
    <property type="entry name" value="BolA"/>
</dbReference>
<dbReference type="InterPro" id="IPR036065">
    <property type="entry name" value="BolA-like_sf"/>
</dbReference>
<dbReference type="InterPro" id="IPR050961">
    <property type="entry name" value="BolA/IbaG_stress_morph_reg"/>
</dbReference>
<dbReference type="PANTHER" id="PTHR46229">
    <property type="entry name" value="BOLA TRANSCRIPTION REGULATOR"/>
    <property type="match status" value="1"/>
</dbReference>
<dbReference type="PANTHER" id="PTHR46229:SF2">
    <property type="entry name" value="BOLA-LIKE PROTEIN 1"/>
    <property type="match status" value="1"/>
</dbReference>
<dbReference type="Pfam" id="PF01722">
    <property type="entry name" value="BolA"/>
    <property type="match status" value="1"/>
</dbReference>
<dbReference type="PIRSF" id="PIRSF003113">
    <property type="entry name" value="BolA"/>
    <property type="match status" value="1"/>
</dbReference>
<dbReference type="SUPFAM" id="SSF82657">
    <property type="entry name" value="BolA-like"/>
    <property type="match status" value="1"/>
</dbReference>
<gene>
    <name type="primary">bolA</name>
    <name type="ordered locus">VC_2296</name>
</gene>
<sequence length="106" mass="12097">MIQDVIEKKLSDEFQPEFLKVINESDMHNVPRGSESHFKVTVVSERFAGLRPVARHRLVNQTLADELANHIHALAIHTYTTQEWQQMNQESPESPMCLGGSRKSAQ</sequence>
<name>BOLA_VIBCH</name>
<organism>
    <name type="scientific">Vibrio cholerae serotype O1 (strain ATCC 39315 / El Tor Inaba N16961)</name>
    <dbReference type="NCBI Taxonomy" id="243277"/>
    <lineage>
        <taxon>Bacteria</taxon>
        <taxon>Pseudomonadati</taxon>
        <taxon>Pseudomonadota</taxon>
        <taxon>Gammaproteobacteria</taxon>
        <taxon>Vibrionales</taxon>
        <taxon>Vibrionaceae</taxon>
        <taxon>Vibrio</taxon>
    </lineage>
</organism>
<reference key="1">
    <citation type="journal article" date="2000" name="Nature">
        <title>DNA sequence of both chromosomes of the cholera pathogen Vibrio cholerae.</title>
        <authorList>
            <person name="Heidelberg J.F."/>
            <person name="Eisen J.A."/>
            <person name="Nelson W.C."/>
            <person name="Clayton R.A."/>
            <person name="Gwinn M.L."/>
            <person name="Dodson R.J."/>
            <person name="Haft D.H."/>
            <person name="Hickey E.K."/>
            <person name="Peterson J.D."/>
            <person name="Umayam L.A."/>
            <person name="Gill S.R."/>
            <person name="Nelson K.E."/>
            <person name="Read T.D."/>
            <person name="Tettelin H."/>
            <person name="Richardson D.L."/>
            <person name="Ermolaeva M.D."/>
            <person name="Vamathevan J.J."/>
            <person name="Bass S."/>
            <person name="Qin H."/>
            <person name="Dragoi I."/>
            <person name="Sellers P."/>
            <person name="McDonald L.A."/>
            <person name="Utterback T.R."/>
            <person name="Fleischmann R.D."/>
            <person name="Nierman W.C."/>
            <person name="White O."/>
            <person name="Salzberg S.L."/>
            <person name="Smith H.O."/>
            <person name="Colwell R.R."/>
            <person name="Mekalanos J.J."/>
            <person name="Venter J.C."/>
            <person name="Fraser C.M."/>
        </authorList>
    </citation>
    <scope>NUCLEOTIDE SEQUENCE [LARGE SCALE GENOMIC DNA]</scope>
    <source>
        <strain>ATCC 39315 / El Tor Inaba N16961</strain>
    </source>
</reference>
<keyword id="KW-0238">DNA-binding</keyword>
<keyword id="KW-1185">Reference proteome</keyword>
<keyword id="KW-0346">Stress response</keyword>
<keyword id="KW-0804">Transcription</keyword>
<keyword id="KW-0805">Transcription regulation</keyword>
<proteinExistence type="inferred from homology"/>
<comment type="function">
    <text evidence="1">Transcriptional regulator that plays an important role in general stress response.</text>
</comment>
<comment type="similarity">
    <text evidence="3">Belongs to the BolA/IbaG family.</text>
</comment>